<dbReference type="EMBL" id="CP000820">
    <property type="protein sequence ID" value="ABW11140.1"/>
    <property type="molecule type" value="Genomic_DNA"/>
</dbReference>
<dbReference type="RefSeq" id="WP_020459313.1">
    <property type="nucleotide sequence ID" value="NC_009921.1"/>
</dbReference>
<dbReference type="SMR" id="A8LE05"/>
<dbReference type="STRING" id="298653.Franean1_1702"/>
<dbReference type="KEGG" id="fre:Franean1_1702"/>
<dbReference type="eggNOG" id="COG0231">
    <property type="taxonomic scope" value="Bacteria"/>
</dbReference>
<dbReference type="HOGENOM" id="CLU_074944_0_1_11"/>
<dbReference type="UniPathway" id="UPA00345"/>
<dbReference type="GO" id="GO:0005737">
    <property type="term" value="C:cytoplasm"/>
    <property type="evidence" value="ECO:0007669"/>
    <property type="project" value="UniProtKB-SubCell"/>
</dbReference>
<dbReference type="GO" id="GO:0003746">
    <property type="term" value="F:translation elongation factor activity"/>
    <property type="evidence" value="ECO:0007669"/>
    <property type="project" value="UniProtKB-UniRule"/>
</dbReference>
<dbReference type="GO" id="GO:0043043">
    <property type="term" value="P:peptide biosynthetic process"/>
    <property type="evidence" value="ECO:0007669"/>
    <property type="project" value="InterPro"/>
</dbReference>
<dbReference type="CDD" id="cd04470">
    <property type="entry name" value="S1_EF-P_repeat_1"/>
    <property type="match status" value="1"/>
</dbReference>
<dbReference type="CDD" id="cd05794">
    <property type="entry name" value="S1_EF-P_repeat_2"/>
    <property type="match status" value="1"/>
</dbReference>
<dbReference type="FunFam" id="2.30.30.30:FF:000003">
    <property type="entry name" value="Elongation factor P"/>
    <property type="match status" value="1"/>
</dbReference>
<dbReference type="FunFam" id="2.40.50.140:FF:000004">
    <property type="entry name" value="Elongation factor P"/>
    <property type="match status" value="1"/>
</dbReference>
<dbReference type="FunFam" id="2.40.50.140:FF:000009">
    <property type="entry name" value="Elongation factor P"/>
    <property type="match status" value="1"/>
</dbReference>
<dbReference type="Gene3D" id="2.30.30.30">
    <property type="match status" value="1"/>
</dbReference>
<dbReference type="Gene3D" id="2.40.50.140">
    <property type="entry name" value="Nucleic acid-binding proteins"/>
    <property type="match status" value="2"/>
</dbReference>
<dbReference type="HAMAP" id="MF_00141">
    <property type="entry name" value="EF_P"/>
    <property type="match status" value="1"/>
</dbReference>
<dbReference type="InterPro" id="IPR015365">
    <property type="entry name" value="Elong-fact-P_C"/>
</dbReference>
<dbReference type="InterPro" id="IPR012340">
    <property type="entry name" value="NA-bd_OB-fold"/>
</dbReference>
<dbReference type="InterPro" id="IPR014722">
    <property type="entry name" value="Rib_uL2_dom2"/>
</dbReference>
<dbReference type="InterPro" id="IPR020599">
    <property type="entry name" value="Transl_elong_fac_P/YeiP"/>
</dbReference>
<dbReference type="InterPro" id="IPR013185">
    <property type="entry name" value="Transl_elong_KOW-like"/>
</dbReference>
<dbReference type="InterPro" id="IPR001059">
    <property type="entry name" value="Transl_elong_P/YeiP_cen"/>
</dbReference>
<dbReference type="InterPro" id="IPR013852">
    <property type="entry name" value="Transl_elong_P/YeiP_CS"/>
</dbReference>
<dbReference type="InterPro" id="IPR011768">
    <property type="entry name" value="Transl_elongation_fac_P"/>
</dbReference>
<dbReference type="InterPro" id="IPR008991">
    <property type="entry name" value="Translation_prot_SH3-like_sf"/>
</dbReference>
<dbReference type="NCBIfam" id="TIGR00038">
    <property type="entry name" value="efp"/>
    <property type="match status" value="1"/>
</dbReference>
<dbReference type="NCBIfam" id="NF001810">
    <property type="entry name" value="PRK00529.1"/>
    <property type="match status" value="1"/>
</dbReference>
<dbReference type="PANTHER" id="PTHR30053">
    <property type="entry name" value="ELONGATION FACTOR P"/>
    <property type="match status" value="1"/>
</dbReference>
<dbReference type="PANTHER" id="PTHR30053:SF12">
    <property type="entry name" value="ELONGATION FACTOR P (EF-P) FAMILY PROTEIN"/>
    <property type="match status" value="1"/>
</dbReference>
<dbReference type="Pfam" id="PF01132">
    <property type="entry name" value="EFP"/>
    <property type="match status" value="1"/>
</dbReference>
<dbReference type="Pfam" id="PF08207">
    <property type="entry name" value="EFP_N"/>
    <property type="match status" value="1"/>
</dbReference>
<dbReference type="Pfam" id="PF09285">
    <property type="entry name" value="Elong-fact-P_C"/>
    <property type="match status" value="1"/>
</dbReference>
<dbReference type="PIRSF" id="PIRSF005901">
    <property type="entry name" value="EF-P"/>
    <property type="match status" value="1"/>
</dbReference>
<dbReference type="SMART" id="SM01185">
    <property type="entry name" value="EFP"/>
    <property type="match status" value="1"/>
</dbReference>
<dbReference type="SMART" id="SM00841">
    <property type="entry name" value="Elong-fact-P_C"/>
    <property type="match status" value="1"/>
</dbReference>
<dbReference type="SUPFAM" id="SSF50249">
    <property type="entry name" value="Nucleic acid-binding proteins"/>
    <property type="match status" value="2"/>
</dbReference>
<dbReference type="SUPFAM" id="SSF50104">
    <property type="entry name" value="Translation proteins SH3-like domain"/>
    <property type="match status" value="1"/>
</dbReference>
<dbReference type="PROSITE" id="PS01275">
    <property type="entry name" value="EFP"/>
    <property type="match status" value="1"/>
</dbReference>
<comment type="function">
    <text evidence="1">Involved in peptide bond synthesis. Stimulates efficient translation and peptide-bond synthesis on native or reconstituted 70S ribosomes in vitro. Probably functions indirectly by altering the affinity of the ribosome for aminoacyl-tRNA, thus increasing their reactivity as acceptors for peptidyl transferase.</text>
</comment>
<comment type="pathway">
    <text evidence="1">Protein biosynthesis; polypeptide chain elongation.</text>
</comment>
<comment type="subcellular location">
    <subcellularLocation>
        <location evidence="1">Cytoplasm</location>
    </subcellularLocation>
</comment>
<comment type="similarity">
    <text evidence="1">Belongs to the elongation factor P family.</text>
</comment>
<reference key="1">
    <citation type="journal article" date="2007" name="Genome Res.">
        <title>Genome characteristics of facultatively symbiotic Frankia sp. strains reflect host range and host plant biogeography.</title>
        <authorList>
            <person name="Normand P."/>
            <person name="Lapierre P."/>
            <person name="Tisa L.S."/>
            <person name="Gogarten J.P."/>
            <person name="Alloisio N."/>
            <person name="Bagnarol E."/>
            <person name="Bassi C.A."/>
            <person name="Berry A.M."/>
            <person name="Bickhart D.M."/>
            <person name="Choisne N."/>
            <person name="Couloux A."/>
            <person name="Cournoyer B."/>
            <person name="Cruveiller S."/>
            <person name="Daubin V."/>
            <person name="Demange N."/>
            <person name="Francino M.P."/>
            <person name="Goltsman E."/>
            <person name="Huang Y."/>
            <person name="Kopp O.R."/>
            <person name="Labarre L."/>
            <person name="Lapidus A."/>
            <person name="Lavire C."/>
            <person name="Marechal J."/>
            <person name="Martinez M."/>
            <person name="Mastronunzio J.E."/>
            <person name="Mullin B.C."/>
            <person name="Niemann J."/>
            <person name="Pujic P."/>
            <person name="Rawnsley T."/>
            <person name="Rouy Z."/>
            <person name="Schenowitz C."/>
            <person name="Sellstedt A."/>
            <person name="Tavares F."/>
            <person name="Tomkins J.P."/>
            <person name="Vallenet D."/>
            <person name="Valverde C."/>
            <person name="Wall L.G."/>
            <person name="Wang Y."/>
            <person name="Medigue C."/>
            <person name="Benson D.R."/>
        </authorList>
    </citation>
    <scope>NUCLEOTIDE SEQUENCE [LARGE SCALE GENOMIC DNA]</scope>
    <source>
        <strain>EAN1pec</strain>
    </source>
</reference>
<evidence type="ECO:0000255" key="1">
    <source>
        <dbReference type="HAMAP-Rule" id="MF_00141"/>
    </source>
</evidence>
<sequence length="187" mass="20068">MATTNDLKNGMTLDIDGVLWNVVGFQHVKPGKGGAFVRTTLKNVLTGKVVDRTFNAGIKVDVATVDRREMTYLYRDGADFVFMDSESYDQIPVPPGVVGGVADYMLENTIATVALHDDAPLYVELPASVELTISATDPGVQGDRSTGGTKPATLETGANIQVPLFITTGEKVKVDTRDGRYLGRVTS</sequence>
<protein>
    <recommendedName>
        <fullName evidence="1">Elongation factor P</fullName>
        <shortName evidence="1">EF-P</shortName>
    </recommendedName>
</protein>
<proteinExistence type="inferred from homology"/>
<feature type="chain" id="PRO_1000096157" description="Elongation factor P">
    <location>
        <begin position="1"/>
        <end position="187"/>
    </location>
</feature>
<organism>
    <name type="scientific">Parafrankia sp. (strain EAN1pec)</name>
    <dbReference type="NCBI Taxonomy" id="298653"/>
    <lineage>
        <taxon>Bacteria</taxon>
        <taxon>Bacillati</taxon>
        <taxon>Actinomycetota</taxon>
        <taxon>Actinomycetes</taxon>
        <taxon>Frankiales</taxon>
        <taxon>Frankiaceae</taxon>
        <taxon>Parafrankia</taxon>
    </lineage>
</organism>
<keyword id="KW-0963">Cytoplasm</keyword>
<keyword id="KW-0251">Elongation factor</keyword>
<keyword id="KW-0648">Protein biosynthesis</keyword>
<gene>
    <name evidence="1" type="primary">efp</name>
    <name type="ordered locus">Franean1_1702</name>
</gene>
<accession>A8LE05</accession>
<name>EFP_PARS2</name>